<evidence type="ECO:0000255" key="1">
    <source>
        <dbReference type="HAMAP-Rule" id="MF_00116"/>
    </source>
</evidence>
<evidence type="ECO:0000256" key="2">
    <source>
        <dbReference type="SAM" id="MobiDB-lite"/>
    </source>
</evidence>
<reference key="1">
    <citation type="journal article" date="2002" name="Nature">
        <title>Complete genome sequence of the model actinomycete Streptomyces coelicolor A3(2).</title>
        <authorList>
            <person name="Bentley S.D."/>
            <person name="Chater K.F."/>
            <person name="Cerdeno-Tarraga A.-M."/>
            <person name="Challis G.L."/>
            <person name="Thomson N.R."/>
            <person name="James K.D."/>
            <person name="Harris D.E."/>
            <person name="Quail M.A."/>
            <person name="Kieser H."/>
            <person name="Harper D."/>
            <person name="Bateman A."/>
            <person name="Brown S."/>
            <person name="Chandra G."/>
            <person name="Chen C.W."/>
            <person name="Collins M."/>
            <person name="Cronin A."/>
            <person name="Fraser A."/>
            <person name="Goble A."/>
            <person name="Hidalgo J."/>
            <person name="Hornsby T."/>
            <person name="Howarth S."/>
            <person name="Huang C.-H."/>
            <person name="Kieser T."/>
            <person name="Larke L."/>
            <person name="Murphy L.D."/>
            <person name="Oliver K."/>
            <person name="O'Neil S."/>
            <person name="Rabbinowitsch E."/>
            <person name="Rajandream M.A."/>
            <person name="Rutherford K.M."/>
            <person name="Rutter S."/>
            <person name="Seeger K."/>
            <person name="Saunders D."/>
            <person name="Sharp S."/>
            <person name="Squares R."/>
            <person name="Squares S."/>
            <person name="Taylor K."/>
            <person name="Warren T."/>
            <person name="Wietzorrek A."/>
            <person name="Woodward J.R."/>
            <person name="Barrell B.G."/>
            <person name="Parkhill J."/>
            <person name="Hopwood D.A."/>
        </authorList>
    </citation>
    <scope>NUCLEOTIDE SEQUENCE [LARGE SCALE GENOMIC DNA]</scope>
    <source>
        <strain>ATCC BAA-471 / A3(2) / M145</strain>
    </source>
</reference>
<organism>
    <name type="scientific">Streptomyces coelicolor (strain ATCC BAA-471 / A3(2) / M145)</name>
    <dbReference type="NCBI Taxonomy" id="100226"/>
    <lineage>
        <taxon>Bacteria</taxon>
        <taxon>Bacillati</taxon>
        <taxon>Actinomycetota</taxon>
        <taxon>Actinomycetes</taxon>
        <taxon>Kitasatosporales</taxon>
        <taxon>Streptomycetaceae</taxon>
        <taxon>Streptomyces</taxon>
        <taxon>Streptomyces albidoflavus group</taxon>
    </lineage>
</organism>
<sequence>MSRAGLEVLIRRVDPDVPLPAYAQPGDAGADLRTTVERELAPGERAVLPTGVSVALPEGYAAFVHPRSGLAARCGVALVNAPGTIDAGYRGEIKVIVVNLDPRESVRFERFDRIAQLVVQQVERVRFRQVAELPGSARAEGGFGSTGGHAGLDPASGTSGQVAEGGPTGGNRYASVVSDREGQ</sequence>
<comment type="function">
    <text evidence="1">This enzyme is involved in nucleotide metabolism: it produces dUMP, the immediate precursor of thymidine nucleotides and it decreases the intracellular concentration of dUTP so that uracil cannot be incorporated into DNA.</text>
</comment>
<comment type="catalytic activity">
    <reaction evidence="1">
        <text>dUTP + H2O = dUMP + diphosphate + H(+)</text>
        <dbReference type="Rhea" id="RHEA:10248"/>
        <dbReference type="ChEBI" id="CHEBI:15377"/>
        <dbReference type="ChEBI" id="CHEBI:15378"/>
        <dbReference type="ChEBI" id="CHEBI:33019"/>
        <dbReference type="ChEBI" id="CHEBI:61555"/>
        <dbReference type="ChEBI" id="CHEBI:246422"/>
        <dbReference type="EC" id="3.6.1.23"/>
    </reaction>
</comment>
<comment type="cofactor">
    <cofactor evidence="1">
        <name>Mg(2+)</name>
        <dbReference type="ChEBI" id="CHEBI:18420"/>
    </cofactor>
</comment>
<comment type="pathway">
    <text evidence="1">Pyrimidine metabolism; dUMP biosynthesis; dUMP from dCTP (dUTP route): step 2/2.</text>
</comment>
<comment type="similarity">
    <text evidence="1">Belongs to the dUTPase family.</text>
</comment>
<keyword id="KW-0378">Hydrolase</keyword>
<keyword id="KW-0460">Magnesium</keyword>
<keyword id="KW-0479">Metal-binding</keyword>
<keyword id="KW-0546">Nucleotide metabolism</keyword>
<keyword id="KW-1185">Reference proteome</keyword>
<protein>
    <recommendedName>
        <fullName evidence="1">Deoxyuridine 5'-triphosphate nucleotidohydrolase</fullName>
        <shortName evidence="1">dUTPase</shortName>
        <ecNumber evidence="1">3.6.1.23</ecNumber>
    </recommendedName>
    <alternativeName>
        <fullName evidence="1">dUTP pyrophosphatase</fullName>
    </alternativeName>
</protein>
<name>DUT_STRCO</name>
<accession>O54134</accession>
<dbReference type="EC" id="3.6.1.23" evidence="1"/>
<dbReference type="EMBL" id="AL939125">
    <property type="protein sequence ID" value="CAA16477.1"/>
    <property type="molecule type" value="Genomic_DNA"/>
</dbReference>
<dbReference type="PIR" id="T34820">
    <property type="entry name" value="T34820"/>
</dbReference>
<dbReference type="RefSeq" id="NP_629990.1">
    <property type="nucleotide sequence ID" value="NC_003888.3"/>
</dbReference>
<dbReference type="RefSeq" id="WP_003973153.1">
    <property type="nucleotide sequence ID" value="NZ_VNID01000007.1"/>
</dbReference>
<dbReference type="SMR" id="O54134"/>
<dbReference type="FunCoup" id="O54134">
    <property type="interactions" value="371"/>
</dbReference>
<dbReference type="STRING" id="100226.gene:17763528"/>
<dbReference type="PaxDb" id="100226-SCO5868"/>
<dbReference type="GeneID" id="91383183"/>
<dbReference type="KEGG" id="sco:SCO5868"/>
<dbReference type="PATRIC" id="fig|100226.15.peg.5967"/>
<dbReference type="eggNOG" id="COG0756">
    <property type="taxonomic scope" value="Bacteria"/>
</dbReference>
<dbReference type="HOGENOM" id="CLU_068508_1_3_11"/>
<dbReference type="InParanoid" id="O54134"/>
<dbReference type="OrthoDB" id="9809956at2"/>
<dbReference type="PhylomeDB" id="O54134"/>
<dbReference type="UniPathway" id="UPA00610">
    <property type="reaction ID" value="UER00666"/>
</dbReference>
<dbReference type="Proteomes" id="UP000001973">
    <property type="component" value="Chromosome"/>
</dbReference>
<dbReference type="GO" id="GO:0004170">
    <property type="term" value="F:dUTP diphosphatase activity"/>
    <property type="evidence" value="ECO:0000318"/>
    <property type="project" value="GO_Central"/>
</dbReference>
<dbReference type="GO" id="GO:0000287">
    <property type="term" value="F:magnesium ion binding"/>
    <property type="evidence" value="ECO:0000318"/>
    <property type="project" value="GO_Central"/>
</dbReference>
<dbReference type="GO" id="GO:0006226">
    <property type="term" value="P:dUMP biosynthetic process"/>
    <property type="evidence" value="ECO:0000318"/>
    <property type="project" value="GO_Central"/>
</dbReference>
<dbReference type="GO" id="GO:0046081">
    <property type="term" value="P:dUTP catabolic process"/>
    <property type="evidence" value="ECO:0000318"/>
    <property type="project" value="GO_Central"/>
</dbReference>
<dbReference type="CDD" id="cd07557">
    <property type="entry name" value="trimeric_dUTPase"/>
    <property type="match status" value="1"/>
</dbReference>
<dbReference type="FunFam" id="2.70.40.10:FF:000008">
    <property type="entry name" value="Deoxyuridine 5'-triphosphate nucleotidohydrolase"/>
    <property type="match status" value="1"/>
</dbReference>
<dbReference type="Gene3D" id="2.70.40.10">
    <property type="match status" value="1"/>
</dbReference>
<dbReference type="HAMAP" id="MF_00116">
    <property type="entry name" value="dUTPase_bact"/>
    <property type="match status" value="1"/>
</dbReference>
<dbReference type="InterPro" id="IPR008181">
    <property type="entry name" value="dUTPase"/>
</dbReference>
<dbReference type="InterPro" id="IPR029054">
    <property type="entry name" value="dUTPase-like"/>
</dbReference>
<dbReference type="InterPro" id="IPR036157">
    <property type="entry name" value="dUTPase-like_sf"/>
</dbReference>
<dbReference type="InterPro" id="IPR033704">
    <property type="entry name" value="dUTPase_trimeric"/>
</dbReference>
<dbReference type="NCBIfam" id="TIGR00576">
    <property type="entry name" value="dut"/>
    <property type="match status" value="1"/>
</dbReference>
<dbReference type="NCBIfam" id="NF001862">
    <property type="entry name" value="PRK00601.1"/>
    <property type="match status" value="1"/>
</dbReference>
<dbReference type="PANTHER" id="PTHR11241">
    <property type="entry name" value="DEOXYURIDINE 5'-TRIPHOSPHATE NUCLEOTIDOHYDROLASE"/>
    <property type="match status" value="1"/>
</dbReference>
<dbReference type="PANTHER" id="PTHR11241:SF0">
    <property type="entry name" value="DEOXYURIDINE 5'-TRIPHOSPHATE NUCLEOTIDOHYDROLASE"/>
    <property type="match status" value="1"/>
</dbReference>
<dbReference type="Pfam" id="PF00692">
    <property type="entry name" value="dUTPase"/>
    <property type="match status" value="1"/>
</dbReference>
<dbReference type="SUPFAM" id="SSF51283">
    <property type="entry name" value="dUTPase-like"/>
    <property type="match status" value="1"/>
</dbReference>
<feature type="chain" id="PRO_0000182910" description="Deoxyuridine 5'-triphosphate nucleotidohydrolase">
    <location>
        <begin position="1"/>
        <end position="183"/>
    </location>
</feature>
<feature type="region of interest" description="Disordered" evidence="2">
    <location>
        <begin position="138"/>
        <end position="183"/>
    </location>
</feature>
<feature type="compositionally biased region" description="Gly residues" evidence="2">
    <location>
        <begin position="141"/>
        <end position="150"/>
    </location>
</feature>
<feature type="binding site" evidence="1">
    <location>
        <begin position="67"/>
        <end position="69"/>
    </location>
    <ligand>
        <name>substrate</name>
    </ligand>
</feature>
<feature type="binding site" evidence="1">
    <location>
        <position position="80"/>
    </location>
    <ligand>
        <name>substrate</name>
    </ligand>
</feature>
<feature type="binding site" evidence="1">
    <location>
        <begin position="84"/>
        <end position="86"/>
    </location>
    <ligand>
        <name>substrate</name>
    </ligand>
</feature>
<feature type="binding site" evidence="1">
    <location>
        <position position="94"/>
    </location>
    <ligand>
        <name>substrate</name>
    </ligand>
</feature>
<proteinExistence type="inferred from homology"/>
<gene>
    <name evidence="1" type="primary">dut</name>
    <name type="ordered locus">SCO5868</name>
    <name type="ORF">SC2E9.09</name>
</gene>